<gene>
    <name evidence="1" type="primary">rpsN</name>
    <name type="synonym">rpsN2</name>
    <name type="ordered locus">NFA_49770</name>
</gene>
<dbReference type="EMBL" id="AP006618">
    <property type="protein sequence ID" value="BAD59829.1"/>
    <property type="molecule type" value="Genomic_DNA"/>
</dbReference>
<dbReference type="RefSeq" id="WP_011211512.1">
    <property type="nucleotide sequence ID" value="NC_006361.1"/>
</dbReference>
<dbReference type="SMR" id="Q5YPR2"/>
<dbReference type="STRING" id="247156.NFA_49770"/>
<dbReference type="GeneID" id="61135562"/>
<dbReference type="KEGG" id="nfa:NFA_49770"/>
<dbReference type="eggNOG" id="COG0199">
    <property type="taxonomic scope" value="Bacteria"/>
</dbReference>
<dbReference type="HOGENOM" id="CLU_139869_0_1_11"/>
<dbReference type="OrthoDB" id="9810484at2"/>
<dbReference type="Proteomes" id="UP000006820">
    <property type="component" value="Chromosome"/>
</dbReference>
<dbReference type="GO" id="GO:0015935">
    <property type="term" value="C:small ribosomal subunit"/>
    <property type="evidence" value="ECO:0007669"/>
    <property type="project" value="TreeGrafter"/>
</dbReference>
<dbReference type="GO" id="GO:0019843">
    <property type="term" value="F:rRNA binding"/>
    <property type="evidence" value="ECO:0007669"/>
    <property type="project" value="UniProtKB-UniRule"/>
</dbReference>
<dbReference type="GO" id="GO:0003735">
    <property type="term" value="F:structural constituent of ribosome"/>
    <property type="evidence" value="ECO:0007669"/>
    <property type="project" value="InterPro"/>
</dbReference>
<dbReference type="GO" id="GO:0006412">
    <property type="term" value="P:translation"/>
    <property type="evidence" value="ECO:0007669"/>
    <property type="project" value="UniProtKB-UniRule"/>
</dbReference>
<dbReference type="FunFam" id="1.10.287.1480:FF:000001">
    <property type="entry name" value="30S ribosomal protein S14"/>
    <property type="match status" value="1"/>
</dbReference>
<dbReference type="Gene3D" id="1.10.287.1480">
    <property type="match status" value="1"/>
</dbReference>
<dbReference type="HAMAP" id="MF_00537">
    <property type="entry name" value="Ribosomal_uS14_1"/>
    <property type="match status" value="1"/>
</dbReference>
<dbReference type="InterPro" id="IPR001209">
    <property type="entry name" value="Ribosomal_uS14"/>
</dbReference>
<dbReference type="InterPro" id="IPR023036">
    <property type="entry name" value="Ribosomal_uS14_bac/plastid"/>
</dbReference>
<dbReference type="NCBIfam" id="NF006477">
    <property type="entry name" value="PRK08881.1"/>
    <property type="match status" value="1"/>
</dbReference>
<dbReference type="PANTHER" id="PTHR19836">
    <property type="entry name" value="30S RIBOSOMAL PROTEIN S14"/>
    <property type="match status" value="1"/>
</dbReference>
<dbReference type="PANTHER" id="PTHR19836:SF23">
    <property type="entry name" value="SMALL RIBOSOMAL SUBUNIT PROTEIN US14A"/>
    <property type="match status" value="1"/>
</dbReference>
<dbReference type="Pfam" id="PF00253">
    <property type="entry name" value="Ribosomal_S14"/>
    <property type="match status" value="1"/>
</dbReference>
<dbReference type="SUPFAM" id="SSF57716">
    <property type="entry name" value="Glucocorticoid receptor-like (DNA-binding domain)"/>
    <property type="match status" value="1"/>
</dbReference>
<name>RS14_NOCFA</name>
<feature type="chain" id="PRO_0000269055" description="Small ribosomal subunit protein uS14A">
    <location>
        <begin position="1"/>
        <end position="101"/>
    </location>
</feature>
<feature type="region of interest" description="Disordered" evidence="2">
    <location>
        <begin position="31"/>
        <end position="74"/>
    </location>
</feature>
<feature type="compositionally biased region" description="Basic and acidic residues" evidence="2">
    <location>
        <begin position="61"/>
        <end position="70"/>
    </location>
</feature>
<keyword id="KW-1185">Reference proteome</keyword>
<keyword id="KW-0687">Ribonucleoprotein</keyword>
<keyword id="KW-0689">Ribosomal protein</keyword>
<keyword id="KW-0694">RNA-binding</keyword>
<keyword id="KW-0699">rRNA-binding</keyword>
<comment type="function">
    <text evidence="1">Binds 16S rRNA, required for the assembly of 30S particles and may also be responsible for determining the conformation of the 16S rRNA at the A site.</text>
</comment>
<comment type="subunit">
    <text evidence="1">Part of the 30S ribosomal subunit. Contacts proteins S3 and S10.</text>
</comment>
<comment type="similarity">
    <text evidence="1">Belongs to the universal ribosomal protein uS14 family.</text>
</comment>
<reference key="1">
    <citation type="journal article" date="2004" name="Proc. Natl. Acad. Sci. U.S.A.">
        <title>The complete genomic sequence of Nocardia farcinica IFM 10152.</title>
        <authorList>
            <person name="Ishikawa J."/>
            <person name="Yamashita A."/>
            <person name="Mikami Y."/>
            <person name="Hoshino Y."/>
            <person name="Kurita H."/>
            <person name="Hotta K."/>
            <person name="Shiba T."/>
            <person name="Hattori M."/>
        </authorList>
    </citation>
    <scope>NUCLEOTIDE SEQUENCE [LARGE SCALE GENOMIC DNA]</scope>
    <source>
        <strain>IFM 10152</strain>
    </source>
</reference>
<sequence length="101" mass="11512">MAKKSKVARNEQRKQIVARYAARRAELKELIRKPSTPEADRAAAQAALQRLPRDASPVRLRNRDAADGRPRGHLRKFGLSRVRVREMAHRGELPGVHKSSW</sequence>
<proteinExistence type="inferred from homology"/>
<organism>
    <name type="scientific">Nocardia farcinica (strain IFM 10152)</name>
    <dbReference type="NCBI Taxonomy" id="247156"/>
    <lineage>
        <taxon>Bacteria</taxon>
        <taxon>Bacillati</taxon>
        <taxon>Actinomycetota</taxon>
        <taxon>Actinomycetes</taxon>
        <taxon>Mycobacteriales</taxon>
        <taxon>Nocardiaceae</taxon>
        <taxon>Nocardia</taxon>
    </lineage>
</organism>
<evidence type="ECO:0000255" key="1">
    <source>
        <dbReference type="HAMAP-Rule" id="MF_00537"/>
    </source>
</evidence>
<evidence type="ECO:0000256" key="2">
    <source>
        <dbReference type="SAM" id="MobiDB-lite"/>
    </source>
</evidence>
<evidence type="ECO:0000305" key="3"/>
<accession>Q5YPR2</accession>
<protein>
    <recommendedName>
        <fullName evidence="1">Small ribosomal subunit protein uS14A</fullName>
    </recommendedName>
    <alternativeName>
        <fullName evidence="3">30S ribosomal protein S14</fullName>
    </alternativeName>
</protein>